<accession>Q6NCN5</accession>
<organism>
    <name type="scientific">Rhodopseudomonas palustris (strain ATCC BAA-98 / CGA009)</name>
    <dbReference type="NCBI Taxonomy" id="258594"/>
    <lineage>
        <taxon>Bacteria</taxon>
        <taxon>Pseudomonadati</taxon>
        <taxon>Pseudomonadota</taxon>
        <taxon>Alphaproteobacteria</taxon>
        <taxon>Hyphomicrobiales</taxon>
        <taxon>Nitrobacteraceae</taxon>
        <taxon>Rhodopseudomonas</taxon>
    </lineage>
</organism>
<feature type="chain" id="PRO_0000228236" description="Translation initiation factor IF-2">
    <location>
        <begin position="1"/>
        <end position="883"/>
    </location>
</feature>
<feature type="domain" description="tr-type G">
    <location>
        <begin position="379"/>
        <end position="548"/>
    </location>
</feature>
<feature type="region of interest" description="Disordered" evidence="3">
    <location>
        <begin position="1"/>
        <end position="259"/>
    </location>
</feature>
<feature type="region of interest" description="G1" evidence="1">
    <location>
        <begin position="388"/>
        <end position="395"/>
    </location>
</feature>
<feature type="region of interest" description="G2" evidence="1">
    <location>
        <begin position="413"/>
        <end position="417"/>
    </location>
</feature>
<feature type="region of interest" description="G3" evidence="1">
    <location>
        <begin position="436"/>
        <end position="439"/>
    </location>
</feature>
<feature type="region of interest" description="G4" evidence="1">
    <location>
        <begin position="490"/>
        <end position="493"/>
    </location>
</feature>
<feature type="region of interest" description="G5" evidence="1">
    <location>
        <begin position="526"/>
        <end position="528"/>
    </location>
</feature>
<feature type="compositionally biased region" description="Low complexity" evidence="3">
    <location>
        <begin position="10"/>
        <end position="22"/>
    </location>
</feature>
<feature type="compositionally biased region" description="Low complexity" evidence="3">
    <location>
        <begin position="77"/>
        <end position="89"/>
    </location>
</feature>
<feature type="compositionally biased region" description="Basic and acidic residues" evidence="3">
    <location>
        <begin position="113"/>
        <end position="184"/>
    </location>
</feature>
<feature type="compositionally biased region" description="Low complexity" evidence="3">
    <location>
        <begin position="185"/>
        <end position="218"/>
    </location>
</feature>
<feature type="compositionally biased region" description="Pro residues" evidence="3">
    <location>
        <begin position="235"/>
        <end position="244"/>
    </location>
</feature>
<feature type="binding site" evidence="2">
    <location>
        <begin position="388"/>
        <end position="395"/>
    </location>
    <ligand>
        <name>GTP</name>
        <dbReference type="ChEBI" id="CHEBI:37565"/>
    </ligand>
</feature>
<feature type="binding site" evidence="2">
    <location>
        <begin position="436"/>
        <end position="440"/>
    </location>
    <ligand>
        <name>GTP</name>
        <dbReference type="ChEBI" id="CHEBI:37565"/>
    </ligand>
</feature>
<feature type="binding site" evidence="2">
    <location>
        <begin position="490"/>
        <end position="493"/>
    </location>
    <ligand>
        <name>GTP</name>
        <dbReference type="ChEBI" id="CHEBI:37565"/>
    </ligand>
</feature>
<evidence type="ECO:0000250" key="1"/>
<evidence type="ECO:0000255" key="2">
    <source>
        <dbReference type="HAMAP-Rule" id="MF_00100"/>
    </source>
</evidence>
<evidence type="ECO:0000256" key="3">
    <source>
        <dbReference type="SAM" id="MobiDB-lite"/>
    </source>
</evidence>
<proteinExistence type="inferred from homology"/>
<sequence>MVDTKTPGDKTLTMPTKTLTLKPRVEQGVVRQSFSHGRSKQVVVEKRGKRRLGGDEPAAPAAPEVAKKPAPAPAAPPRQQQSRPAPQQSRSGMVLRTLTEDERTARATALADARVREIEERKQAEIEAQRRAEQEKIEKAEREAAEARRKAEEERHRQEDEAKRKAETEAKKRFGDAEPAKKPAETSTTTTTAAPARPATTTTRTPTPAGRPPAVAAEAGDDDEAPRMIRRPGGPARPAPPPKQPAAKPGASKQRGRLTVVTALNADDVRERSIASFRRRTQRLKGHASNEPKEKLVREVVIPEVIAIQELANRMSERAVDVIRLLMKQGAMHKITDVIDADTAQLIAEELGHTVKRVAASDVEEGLFDVVDDSTDTEPRSPVVTVMGHVDHGKTSLLDALRHANVVSGEAGGITQHIGAYQVTSPESGKKITFIDTPGHAAFTAMRARGAKVTDIVVLVVAADDGVMPQTIEAINHAKAAGVPIIVAINKIDKPDAKPDRVRTDLLQHNVQVESMGGDVVDVEVSAKNKINLDKLLEMIALQAEILELKTNTQRPAEGTVIEAKLDRGRGPVATVLVQRGTLRVGDIIVAGAEMGRVRALISDQGETVQEAGPSVPVEVLGFNGPPEAGDRLAVVENEARARQITDYRAHQKREKSAASVSGMRGSLEQMMTQLKTSGRKEFPLIVKADVQGSLEAILGSLEKLGTDEVAARILHAGVGGISESDVTLAEGFNAVILGFSVRANKEAAAAAKRNGIEIRYYNIIYDLVDDIKKAMSGLLAPTLRETMLGNAQILEIFNISKVGKVAGCRVTDGTVERGANVRLIRDNVVVHEGKLSTLKRFKDEVKEVVAGQECGMAFENYTDMRAGDIIECYRVETIQRSL</sequence>
<keyword id="KW-0963">Cytoplasm</keyword>
<keyword id="KW-0342">GTP-binding</keyword>
<keyword id="KW-0396">Initiation factor</keyword>
<keyword id="KW-0547">Nucleotide-binding</keyword>
<keyword id="KW-0648">Protein biosynthesis</keyword>
<gene>
    <name evidence="2" type="primary">infB</name>
    <name type="ordered locus">RPA0436</name>
</gene>
<name>IF2_RHOPA</name>
<reference key="1">
    <citation type="journal article" date="2004" name="Nat. Biotechnol.">
        <title>Complete genome sequence of the metabolically versatile photosynthetic bacterium Rhodopseudomonas palustris.</title>
        <authorList>
            <person name="Larimer F.W."/>
            <person name="Chain P."/>
            <person name="Hauser L."/>
            <person name="Lamerdin J.E."/>
            <person name="Malfatti S."/>
            <person name="Do L."/>
            <person name="Land M.L."/>
            <person name="Pelletier D.A."/>
            <person name="Beatty J.T."/>
            <person name="Lang A.S."/>
            <person name="Tabita F.R."/>
            <person name="Gibson J.L."/>
            <person name="Hanson T.E."/>
            <person name="Bobst C."/>
            <person name="Torres y Torres J.L."/>
            <person name="Peres C."/>
            <person name="Harrison F.H."/>
            <person name="Gibson J."/>
            <person name="Harwood C.S."/>
        </authorList>
    </citation>
    <scope>NUCLEOTIDE SEQUENCE [LARGE SCALE GENOMIC DNA]</scope>
    <source>
        <strain>ATCC BAA-98 / CGA009</strain>
    </source>
</reference>
<dbReference type="EMBL" id="BX572594">
    <property type="protein sequence ID" value="CAE25880.1"/>
    <property type="molecule type" value="Genomic_DNA"/>
</dbReference>
<dbReference type="RefSeq" id="WP_011156004.1">
    <property type="nucleotide sequence ID" value="NZ_CP116810.1"/>
</dbReference>
<dbReference type="SMR" id="Q6NCN5"/>
<dbReference type="STRING" id="258594.RPA0436"/>
<dbReference type="GeneID" id="66891451"/>
<dbReference type="eggNOG" id="COG0532">
    <property type="taxonomic scope" value="Bacteria"/>
</dbReference>
<dbReference type="HOGENOM" id="CLU_006301_10_0_5"/>
<dbReference type="PhylomeDB" id="Q6NCN5"/>
<dbReference type="GO" id="GO:0005829">
    <property type="term" value="C:cytosol"/>
    <property type="evidence" value="ECO:0007669"/>
    <property type="project" value="TreeGrafter"/>
</dbReference>
<dbReference type="GO" id="GO:0005525">
    <property type="term" value="F:GTP binding"/>
    <property type="evidence" value="ECO:0007669"/>
    <property type="project" value="UniProtKB-KW"/>
</dbReference>
<dbReference type="GO" id="GO:0003924">
    <property type="term" value="F:GTPase activity"/>
    <property type="evidence" value="ECO:0007669"/>
    <property type="project" value="UniProtKB-UniRule"/>
</dbReference>
<dbReference type="GO" id="GO:0097216">
    <property type="term" value="F:guanosine tetraphosphate binding"/>
    <property type="evidence" value="ECO:0007669"/>
    <property type="project" value="UniProtKB-ARBA"/>
</dbReference>
<dbReference type="GO" id="GO:0003743">
    <property type="term" value="F:translation initiation factor activity"/>
    <property type="evidence" value="ECO:0007669"/>
    <property type="project" value="UniProtKB-UniRule"/>
</dbReference>
<dbReference type="CDD" id="cd01887">
    <property type="entry name" value="IF2_eIF5B"/>
    <property type="match status" value="1"/>
</dbReference>
<dbReference type="CDD" id="cd03702">
    <property type="entry name" value="IF2_mtIF2_II"/>
    <property type="match status" value="1"/>
</dbReference>
<dbReference type="CDD" id="cd03692">
    <property type="entry name" value="mtIF2_IVc"/>
    <property type="match status" value="1"/>
</dbReference>
<dbReference type="FunFam" id="2.40.30.10:FF:000007">
    <property type="entry name" value="Translation initiation factor IF-2"/>
    <property type="match status" value="1"/>
</dbReference>
<dbReference type="FunFam" id="2.40.30.10:FF:000008">
    <property type="entry name" value="Translation initiation factor IF-2"/>
    <property type="match status" value="1"/>
</dbReference>
<dbReference type="FunFam" id="3.40.50.10050:FF:000001">
    <property type="entry name" value="Translation initiation factor IF-2"/>
    <property type="match status" value="1"/>
</dbReference>
<dbReference type="FunFam" id="3.40.50.300:FF:000019">
    <property type="entry name" value="Translation initiation factor IF-2"/>
    <property type="match status" value="1"/>
</dbReference>
<dbReference type="Gene3D" id="3.40.50.300">
    <property type="entry name" value="P-loop containing nucleotide triphosphate hydrolases"/>
    <property type="match status" value="1"/>
</dbReference>
<dbReference type="Gene3D" id="2.40.30.10">
    <property type="entry name" value="Translation factors"/>
    <property type="match status" value="2"/>
</dbReference>
<dbReference type="Gene3D" id="3.40.50.10050">
    <property type="entry name" value="Translation initiation factor IF- 2, domain 3"/>
    <property type="match status" value="1"/>
</dbReference>
<dbReference type="HAMAP" id="MF_00100_B">
    <property type="entry name" value="IF_2_B"/>
    <property type="match status" value="1"/>
</dbReference>
<dbReference type="InterPro" id="IPR053905">
    <property type="entry name" value="EF-G-like_DII"/>
</dbReference>
<dbReference type="InterPro" id="IPR004161">
    <property type="entry name" value="EFTu-like_2"/>
</dbReference>
<dbReference type="InterPro" id="IPR013575">
    <property type="entry name" value="IF2_assoc_dom_bac"/>
</dbReference>
<dbReference type="InterPro" id="IPR044145">
    <property type="entry name" value="IF2_II"/>
</dbReference>
<dbReference type="InterPro" id="IPR006847">
    <property type="entry name" value="IF2_N"/>
</dbReference>
<dbReference type="InterPro" id="IPR027417">
    <property type="entry name" value="P-loop_NTPase"/>
</dbReference>
<dbReference type="InterPro" id="IPR005225">
    <property type="entry name" value="Small_GTP-bd"/>
</dbReference>
<dbReference type="InterPro" id="IPR000795">
    <property type="entry name" value="T_Tr_GTP-bd_dom"/>
</dbReference>
<dbReference type="InterPro" id="IPR000178">
    <property type="entry name" value="TF_IF2_bacterial-like"/>
</dbReference>
<dbReference type="InterPro" id="IPR015760">
    <property type="entry name" value="TIF_IF2"/>
</dbReference>
<dbReference type="InterPro" id="IPR023115">
    <property type="entry name" value="TIF_IF2_dom3"/>
</dbReference>
<dbReference type="InterPro" id="IPR036925">
    <property type="entry name" value="TIF_IF2_dom3_sf"/>
</dbReference>
<dbReference type="InterPro" id="IPR009000">
    <property type="entry name" value="Transl_B-barrel_sf"/>
</dbReference>
<dbReference type="NCBIfam" id="TIGR00487">
    <property type="entry name" value="IF-2"/>
    <property type="match status" value="1"/>
</dbReference>
<dbReference type="NCBIfam" id="TIGR00231">
    <property type="entry name" value="small_GTP"/>
    <property type="match status" value="1"/>
</dbReference>
<dbReference type="PANTHER" id="PTHR43381:SF5">
    <property type="entry name" value="TR-TYPE G DOMAIN-CONTAINING PROTEIN"/>
    <property type="match status" value="1"/>
</dbReference>
<dbReference type="PANTHER" id="PTHR43381">
    <property type="entry name" value="TRANSLATION INITIATION FACTOR IF-2-RELATED"/>
    <property type="match status" value="1"/>
</dbReference>
<dbReference type="Pfam" id="PF22042">
    <property type="entry name" value="EF-G_D2"/>
    <property type="match status" value="1"/>
</dbReference>
<dbReference type="Pfam" id="PF00009">
    <property type="entry name" value="GTP_EFTU"/>
    <property type="match status" value="1"/>
</dbReference>
<dbReference type="Pfam" id="PF03144">
    <property type="entry name" value="GTP_EFTU_D2"/>
    <property type="match status" value="1"/>
</dbReference>
<dbReference type="Pfam" id="PF11987">
    <property type="entry name" value="IF-2"/>
    <property type="match status" value="1"/>
</dbReference>
<dbReference type="Pfam" id="PF08364">
    <property type="entry name" value="IF2_assoc"/>
    <property type="match status" value="1"/>
</dbReference>
<dbReference type="Pfam" id="PF04760">
    <property type="entry name" value="IF2_N"/>
    <property type="match status" value="1"/>
</dbReference>
<dbReference type="SUPFAM" id="SSF52156">
    <property type="entry name" value="Initiation factor IF2/eIF5b, domain 3"/>
    <property type="match status" value="1"/>
</dbReference>
<dbReference type="SUPFAM" id="SSF52540">
    <property type="entry name" value="P-loop containing nucleoside triphosphate hydrolases"/>
    <property type="match status" value="1"/>
</dbReference>
<dbReference type="SUPFAM" id="SSF50447">
    <property type="entry name" value="Translation proteins"/>
    <property type="match status" value="2"/>
</dbReference>
<dbReference type="PROSITE" id="PS51722">
    <property type="entry name" value="G_TR_2"/>
    <property type="match status" value="1"/>
</dbReference>
<dbReference type="PROSITE" id="PS01176">
    <property type="entry name" value="IF2"/>
    <property type="match status" value="1"/>
</dbReference>
<protein>
    <recommendedName>
        <fullName evidence="2">Translation initiation factor IF-2</fullName>
    </recommendedName>
</protein>
<comment type="function">
    <text evidence="2">One of the essential components for the initiation of protein synthesis. Protects formylmethionyl-tRNA from spontaneous hydrolysis and promotes its binding to the 30S ribosomal subunits. Also involved in the hydrolysis of GTP during the formation of the 70S ribosomal complex.</text>
</comment>
<comment type="subcellular location">
    <subcellularLocation>
        <location evidence="2">Cytoplasm</location>
    </subcellularLocation>
</comment>
<comment type="similarity">
    <text evidence="2">Belongs to the TRAFAC class translation factor GTPase superfamily. Classic translation factor GTPase family. IF-2 subfamily.</text>
</comment>